<proteinExistence type="inferred from homology"/>
<reference key="1">
    <citation type="journal article" date="2008" name="J. Biotechnol.">
        <title>Ultrafast pyrosequencing of Corynebacterium kroppenstedtii DSM44385 revealed insights into the physiology of a lipophilic corynebacterium that lacks mycolic acids.</title>
        <authorList>
            <person name="Tauch A."/>
            <person name="Schneider J."/>
            <person name="Szczepanowski R."/>
            <person name="Tilker A."/>
            <person name="Viehoever P."/>
            <person name="Gartemann K.-H."/>
            <person name="Arnold W."/>
            <person name="Blom J."/>
            <person name="Brinkrolf K."/>
            <person name="Brune I."/>
            <person name="Goetker S."/>
            <person name="Weisshaar B."/>
            <person name="Goesmann A."/>
            <person name="Droege M."/>
            <person name="Puehler A."/>
        </authorList>
    </citation>
    <scope>NUCLEOTIDE SEQUENCE [LARGE SCALE GENOMIC DNA]</scope>
    <source>
        <strain>DSM 44385 / JCM 11950 / CIP 105744 / CCUG 35717</strain>
    </source>
</reference>
<organism>
    <name type="scientific">Corynebacterium kroppenstedtii (strain DSM 44385 / JCM 11950 / CIP 105744 / CCUG 35717)</name>
    <dbReference type="NCBI Taxonomy" id="645127"/>
    <lineage>
        <taxon>Bacteria</taxon>
        <taxon>Bacillati</taxon>
        <taxon>Actinomycetota</taxon>
        <taxon>Actinomycetes</taxon>
        <taxon>Mycobacteriales</taxon>
        <taxon>Corynebacteriaceae</taxon>
        <taxon>Corynebacterium</taxon>
    </lineage>
</organism>
<gene>
    <name evidence="2" type="primary">rpsL</name>
    <name type="ordered locus">ckrop_1852</name>
</gene>
<comment type="function">
    <text evidence="2">With S4 and S5 plays an important role in translational accuracy.</text>
</comment>
<comment type="function">
    <text evidence="2">Interacts with and stabilizes bases of the 16S rRNA that are involved in tRNA selection in the A site and with the mRNA backbone. Located at the interface of the 30S and 50S subunits, it traverses the body of the 30S subunit contacting proteins on the other side and probably holding the rRNA structure together. The combined cluster of proteins S8, S12 and S17 appears to hold together the shoulder and platform of the 30S subunit.</text>
</comment>
<comment type="subunit">
    <text evidence="2">Part of the 30S ribosomal subunit. Contacts proteins S8 and S17. May interact with IF1 in the 30S initiation complex.</text>
</comment>
<comment type="similarity">
    <text evidence="2">Belongs to the universal ribosomal protein uS12 family.</text>
</comment>
<name>RS12_CORK4</name>
<dbReference type="EMBL" id="CP001620">
    <property type="protein sequence ID" value="ACR18571.1"/>
    <property type="molecule type" value="Genomic_DNA"/>
</dbReference>
<dbReference type="RefSeq" id="WP_012732458.1">
    <property type="nucleotide sequence ID" value="NC_012704.1"/>
</dbReference>
<dbReference type="SMR" id="C4LL66"/>
<dbReference type="STRING" id="645127.ckrop_1852"/>
<dbReference type="GeneID" id="92726649"/>
<dbReference type="KEGG" id="ckp:ckrop_1852"/>
<dbReference type="eggNOG" id="COG0048">
    <property type="taxonomic scope" value="Bacteria"/>
</dbReference>
<dbReference type="HOGENOM" id="CLU_104295_1_2_11"/>
<dbReference type="OrthoDB" id="9802366at2"/>
<dbReference type="Proteomes" id="UP000001473">
    <property type="component" value="Chromosome"/>
</dbReference>
<dbReference type="GO" id="GO:0015935">
    <property type="term" value="C:small ribosomal subunit"/>
    <property type="evidence" value="ECO:0007669"/>
    <property type="project" value="InterPro"/>
</dbReference>
<dbReference type="GO" id="GO:0019843">
    <property type="term" value="F:rRNA binding"/>
    <property type="evidence" value="ECO:0007669"/>
    <property type="project" value="UniProtKB-UniRule"/>
</dbReference>
<dbReference type="GO" id="GO:0003735">
    <property type="term" value="F:structural constituent of ribosome"/>
    <property type="evidence" value="ECO:0007669"/>
    <property type="project" value="InterPro"/>
</dbReference>
<dbReference type="GO" id="GO:0000049">
    <property type="term" value="F:tRNA binding"/>
    <property type="evidence" value="ECO:0007669"/>
    <property type="project" value="UniProtKB-UniRule"/>
</dbReference>
<dbReference type="GO" id="GO:0006412">
    <property type="term" value="P:translation"/>
    <property type="evidence" value="ECO:0007669"/>
    <property type="project" value="UniProtKB-UniRule"/>
</dbReference>
<dbReference type="CDD" id="cd03368">
    <property type="entry name" value="Ribosomal_S12"/>
    <property type="match status" value="1"/>
</dbReference>
<dbReference type="FunFam" id="2.40.50.140:FF:000001">
    <property type="entry name" value="30S ribosomal protein S12"/>
    <property type="match status" value="1"/>
</dbReference>
<dbReference type="Gene3D" id="2.40.50.140">
    <property type="entry name" value="Nucleic acid-binding proteins"/>
    <property type="match status" value="1"/>
</dbReference>
<dbReference type="HAMAP" id="MF_00403_B">
    <property type="entry name" value="Ribosomal_uS12_B"/>
    <property type="match status" value="1"/>
</dbReference>
<dbReference type="InterPro" id="IPR012340">
    <property type="entry name" value="NA-bd_OB-fold"/>
</dbReference>
<dbReference type="InterPro" id="IPR006032">
    <property type="entry name" value="Ribosomal_uS12"/>
</dbReference>
<dbReference type="InterPro" id="IPR005679">
    <property type="entry name" value="Ribosomal_uS12_bac"/>
</dbReference>
<dbReference type="NCBIfam" id="TIGR00981">
    <property type="entry name" value="rpsL_bact"/>
    <property type="match status" value="1"/>
</dbReference>
<dbReference type="PANTHER" id="PTHR11652">
    <property type="entry name" value="30S RIBOSOMAL PROTEIN S12 FAMILY MEMBER"/>
    <property type="match status" value="1"/>
</dbReference>
<dbReference type="Pfam" id="PF00164">
    <property type="entry name" value="Ribosom_S12_S23"/>
    <property type="match status" value="1"/>
</dbReference>
<dbReference type="PIRSF" id="PIRSF002133">
    <property type="entry name" value="Ribosomal_S12/S23"/>
    <property type="match status" value="1"/>
</dbReference>
<dbReference type="PRINTS" id="PR01034">
    <property type="entry name" value="RIBOSOMALS12"/>
</dbReference>
<dbReference type="SUPFAM" id="SSF50249">
    <property type="entry name" value="Nucleic acid-binding proteins"/>
    <property type="match status" value="1"/>
</dbReference>
<dbReference type="PROSITE" id="PS00055">
    <property type="entry name" value="RIBOSOMAL_S12"/>
    <property type="match status" value="1"/>
</dbReference>
<accession>C4LL66</accession>
<sequence>MPTIQQLVRKGRKDKKAKVKTAALKGSPQRRGVCTRVYTTTPKKPNSALRKVARVRLTSGIEVSAYIPGEGHNLQEHSMVLVRGGRVKDLPGVRYRIIRGSLDTQGVKDRKQARSRYGAKKEK</sequence>
<evidence type="ECO:0000250" key="1"/>
<evidence type="ECO:0000255" key="2">
    <source>
        <dbReference type="HAMAP-Rule" id="MF_00403"/>
    </source>
</evidence>
<evidence type="ECO:0000256" key="3">
    <source>
        <dbReference type="SAM" id="MobiDB-lite"/>
    </source>
</evidence>
<evidence type="ECO:0000305" key="4"/>
<protein>
    <recommendedName>
        <fullName evidence="2">Small ribosomal subunit protein uS12</fullName>
    </recommendedName>
    <alternativeName>
        <fullName evidence="4">30S ribosomal protein S12</fullName>
    </alternativeName>
</protein>
<feature type="chain" id="PRO_1000205908" description="Small ribosomal subunit protein uS12">
    <location>
        <begin position="1"/>
        <end position="123"/>
    </location>
</feature>
<feature type="region of interest" description="Disordered" evidence="3">
    <location>
        <begin position="1"/>
        <end position="32"/>
    </location>
</feature>
<feature type="compositionally biased region" description="Basic residues" evidence="3">
    <location>
        <begin position="9"/>
        <end position="19"/>
    </location>
</feature>
<feature type="modified residue" description="3-methylthioaspartic acid" evidence="1">
    <location>
        <position position="89"/>
    </location>
</feature>
<keyword id="KW-0488">Methylation</keyword>
<keyword id="KW-1185">Reference proteome</keyword>
<keyword id="KW-0687">Ribonucleoprotein</keyword>
<keyword id="KW-0689">Ribosomal protein</keyword>
<keyword id="KW-0694">RNA-binding</keyword>
<keyword id="KW-0699">rRNA-binding</keyword>
<keyword id="KW-0820">tRNA-binding</keyword>